<sequence>MKNRTSVTDFILLGLTDNPQLQVVIFSFLFLTYVLSVTGNLTIISLTLLDSHLKTPMYFFLRNFSLEISFTSVCNPRFLISILTGDKSISYNACAAQLFFFIFLGSTEFFLLASMSYDCYVAICKPLHYTTIMSDRICYQLIISSWLAGFLVIFPPLAMGLQLDFCDSNVIDHFTCDSAPLLQISCTDTSTLELMSFILALFTLISTLILVILSYTYIIRTILRIPSAQQRKKAFSTCSSHVIVVSISYGSCIFMYVKTSAKEGVALTKGVAILNTSVAPMLNPFIYTLRNQQVKQAFKDVLRKISHKKKKH</sequence>
<evidence type="ECO:0000255" key="1"/>
<evidence type="ECO:0000255" key="2">
    <source>
        <dbReference type="PROSITE-ProRule" id="PRU00521"/>
    </source>
</evidence>
<evidence type="ECO:0000305" key="3"/>
<comment type="function">
    <text evidence="3">Odorant receptor.</text>
</comment>
<comment type="subcellular location">
    <subcellularLocation>
        <location>Cell membrane</location>
        <topology>Multi-pass membrane protein</topology>
    </subcellularLocation>
</comment>
<comment type="similarity">
    <text evidence="2">Belongs to the G-protein coupled receptor 1 family.</text>
</comment>
<comment type="online information" name="Human Olfactory Receptor Data Exploratorium (HORDE)">
    <link uri="http://genome.weizmann.ac.il/horde/card/index/symbol:OR6C76"/>
</comment>
<name>O6C76_HUMAN</name>
<reference key="1">
    <citation type="journal article" date="2006" name="Nature">
        <title>The finished DNA sequence of human chromosome 12.</title>
        <authorList>
            <person name="Scherer S.E."/>
            <person name="Muzny D.M."/>
            <person name="Buhay C.J."/>
            <person name="Chen R."/>
            <person name="Cree A."/>
            <person name="Ding Y."/>
            <person name="Dugan-Rocha S."/>
            <person name="Gill R."/>
            <person name="Gunaratne P."/>
            <person name="Harris R.A."/>
            <person name="Hawes A.C."/>
            <person name="Hernandez J."/>
            <person name="Hodgson A.V."/>
            <person name="Hume J."/>
            <person name="Jackson A."/>
            <person name="Khan Z.M."/>
            <person name="Kovar-Smith C."/>
            <person name="Lewis L.R."/>
            <person name="Lozado R.J."/>
            <person name="Metzker M.L."/>
            <person name="Milosavljevic A."/>
            <person name="Miner G.R."/>
            <person name="Montgomery K.T."/>
            <person name="Morgan M.B."/>
            <person name="Nazareth L.V."/>
            <person name="Scott G."/>
            <person name="Sodergren E."/>
            <person name="Song X.-Z."/>
            <person name="Steffen D."/>
            <person name="Lovering R.C."/>
            <person name="Wheeler D.A."/>
            <person name="Worley K.C."/>
            <person name="Yuan Y."/>
            <person name="Zhang Z."/>
            <person name="Adams C.Q."/>
            <person name="Ansari-Lari M.A."/>
            <person name="Ayele M."/>
            <person name="Brown M.J."/>
            <person name="Chen G."/>
            <person name="Chen Z."/>
            <person name="Clerc-Blankenburg K.P."/>
            <person name="Davis C."/>
            <person name="Delgado O."/>
            <person name="Dinh H.H."/>
            <person name="Draper H."/>
            <person name="Gonzalez-Garay M.L."/>
            <person name="Havlak P."/>
            <person name="Jackson L.R."/>
            <person name="Jacob L.S."/>
            <person name="Kelly S.H."/>
            <person name="Li L."/>
            <person name="Li Z."/>
            <person name="Liu J."/>
            <person name="Liu W."/>
            <person name="Lu J."/>
            <person name="Maheshwari M."/>
            <person name="Nguyen B.-V."/>
            <person name="Okwuonu G.O."/>
            <person name="Pasternak S."/>
            <person name="Perez L.M."/>
            <person name="Plopper F.J.H."/>
            <person name="Santibanez J."/>
            <person name="Shen H."/>
            <person name="Tabor P.E."/>
            <person name="Verduzco D."/>
            <person name="Waldron L."/>
            <person name="Wang Q."/>
            <person name="Williams G.A."/>
            <person name="Zhang J."/>
            <person name="Zhou J."/>
            <person name="Allen C.C."/>
            <person name="Amin A.G."/>
            <person name="Anyalebechi V."/>
            <person name="Bailey M."/>
            <person name="Barbaria J.A."/>
            <person name="Bimage K.E."/>
            <person name="Bryant N.P."/>
            <person name="Burch P.E."/>
            <person name="Burkett C.E."/>
            <person name="Burrell K.L."/>
            <person name="Calderon E."/>
            <person name="Cardenas V."/>
            <person name="Carter K."/>
            <person name="Casias K."/>
            <person name="Cavazos I."/>
            <person name="Cavazos S.R."/>
            <person name="Ceasar H."/>
            <person name="Chacko J."/>
            <person name="Chan S.N."/>
            <person name="Chavez D."/>
            <person name="Christopoulos C."/>
            <person name="Chu J."/>
            <person name="Cockrell R."/>
            <person name="Cox C.D."/>
            <person name="Dang M."/>
            <person name="Dathorne S.R."/>
            <person name="David R."/>
            <person name="Davis C.M."/>
            <person name="Davy-Carroll L."/>
            <person name="Deshazo D.R."/>
            <person name="Donlin J.E."/>
            <person name="D'Souza L."/>
            <person name="Eaves K.A."/>
            <person name="Egan A."/>
            <person name="Emery-Cohen A.J."/>
            <person name="Escotto M."/>
            <person name="Flagg N."/>
            <person name="Forbes L.D."/>
            <person name="Gabisi A.M."/>
            <person name="Garza M."/>
            <person name="Hamilton C."/>
            <person name="Henderson N."/>
            <person name="Hernandez O."/>
            <person name="Hines S."/>
            <person name="Hogues M.E."/>
            <person name="Huang M."/>
            <person name="Idlebird D.G."/>
            <person name="Johnson R."/>
            <person name="Jolivet A."/>
            <person name="Jones S."/>
            <person name="Kagan R."/>
            <person name="King L.M."/>
            <person name="Leal B."/>
            <person name="Lebow H."/>
            <person name="Lee S."/>
            <person name="LeVan J.M."/>
            <person name="Lewis L.C."/>
            <person name="London P."/>
            <person name="Lorensuhewa L.M."/>
            <person name="Loulseged H."/>
            <person name="Lovett D.A."/>
            <person name="Lucier A."/>
            <person name="Lucier R.L."/>
            <person name="Ma J."/>
            <person name="Madu R.C."/>
            <person name="Mapua P."/>
            <person name="Martindale A.D."/>
            <person name="Martinez E."/>
            <person name="Massey E."/>
            <person name="Mawhiney S."/>
            <person name="Meador M.G."/>
            <person name="Mendez S."/>
            <person name="Mercado C."/>
            <person name="Mercado I.C."/>
            <person name="Merritt C.E."/>
            <person name="Miner Z.L."/>
            <person name="Minja E."/>
            <person name="Mitchell T."/>
            <person name="Mohabbat F."/>
            <person name="Mohabbat K."/>
            <person name="Montgomery B."/>
            <person name="Moore N."/>
            <person name="Morris S."/>
            <person name="Munidasa M."/>
            <person name="Ngo R.N."/>
            <person name="Nguyen N.B."/>
            <person name="Nickerson E."/>
            <person name="Nwaokelemeh O.O."/>
            <person name="Nwokenkwo S."/>
            <person name="Obregon M."/>
            <person name="Oguh M."/>
            <person name="Oragunye N."/>
            <person name="Oviedo R.J."/>
            <person name="Parish B.J."/>
            <person name="Parker D.N."/>
            <person name="Parrish J."/>
            <person name="Parks K.L."/>
            <person name="Paul H.A."/>
            <person name="Payton B.A."/>
            <person name="Perez A."/>
            <person name="Perrin W."/>
            <person name="Pickens A."/>
            <person name="Primus E.L."/>
            <person name="Pu L.-L."/>
            <person name="Puazo M."/>
            <person name="Quiles M.M."/>
            <person name="Quiroz J.B."/>
            <person name="Rabata D."/>
            <person name="Reeves K."/>
            <person name="Ruiz S.J."/>
            <person name="Shao H."/>
            <person name="Sisson I."/>
            <person name="Sonaike T."/>
            <person name="Sorelle R.P."/>
            <person name="Sutton A.E."/>
            <person name="Svatek A.F."/>
            <person name="Svetz L.A."/>
            <person name="Tamerisa K.S."/>
            <person name="Taylor T.R."/>
            <person name="Teague B."/>
            <person name="Thomas N."/>
            <person name="Thorn R.D."/>
            <person name="Trejos Z.Y."/>
            <person name="Trevino B.K."/>
            <person name="Ukegbu O.N."/>
            <person name="Urban J.B."/>
            <person name="Vasquez L.I."/>
            <person name="Vera V.A."/>
            <person name="Villasana D.M."/>
            <person name="Wang L."/>
            <person name="Ward-Moore S."/>
            <person name="Warren J.T."/>
            <person name="Wei X."/>
            <person name="White F."/>
            <person name="Williamson A.L."/>
            <person name="Wleczyk R."/>
            <person name="Wooden H.S."/>
            <person name="Wooden S.H."/>
            <person name="Yen J."/>
            <person name="Yoon L."/>
            <person name="Yoon V."/>
            <person name="Zorrilla S.E."/>
            <person name="Nelson D."/>
            <person name="Kucherlapati R."/>
            <person name="Weinstock G."/>
            <person name="Gibbs R.A."/>
        </authorList>
    </citation>
    <scope>NUCLEOTIDE SEQUENCE [LARGE SCALE GENOMIC DNA]</scope>
</reference>
<feature type="chain" id="PRO_0000310868" description="Olfactory receptor 6C76">
    <location>
        <begin position="1"/>
        <end position="312"/>
    </location>
</feature>
<feature type="topological domain" description="Extracellular" evidence="1">
    <location>
        <begin position="1"/>
        <end position="23"/>
    </location>
</feature>
<feature type="transmembrane region" description="Helical; Name=1" evidence="1">
    <location>
        <begin position="24"/>
        <end position="44"/>
    </location>
</feature>
<feature type="topological domain" description="Cytoplasmic" evidence="1">
    <location>
        <begin position="45"/>
        <end position="57"/>
    </location>
</feature>
<feature type="transmembrane region" description="Helical; Name=2" evidence="1">
    <location>
        <begin position="58"/>
        <end position="80"/>
    </location>
</feature>
<feature type="topological domain" description="Extracellular" evidence="1">
    <location>
        <begin position="81"/>
        <end position="94"/>
    </location>
</feature>
<feature type="transmembrane region" description="Helical; Name=3" evidence="1">
    <location>
        <begin position="95"/>
        <end position="115"/>
    </location>
</feature>
<feature type="topological domain" description="Cytoplasmic" evidence="1">
    <location>
        <begin position="116"/>
        <end position="142"/>
    </location>
</feature>
<feature type="transmembrane region" description="Helical; Name=4" evidence="1">
    <location>
        <begin position="143"/>
        <end position="163"/>
    </location>
</feature>
<feature type="topological domain" description="Extracellular" evidence="1">
    <location>
        <begin position="164"/>
        <end position="195"/>
    </location>
</feature>
<feature type="transmembrane region" description="Helical; Name=5" evidence="1">
    <location>
        <begin position="196"/>
        <end position="216"/>
    </location>
</feature>
<feature type="topological domain" description="Cytoplasmic" evidence="1">
    <location>
        <begin position="217"/>
        <end position="238"/>
    </location>
</feature>
<feature type="transmembrane region" description="Helical; Name=6" evidence="1">
    <location>
        <begin position="239"/>
        <end position="259"/>
    </location>
</feature>
<feature type="topological domain" description="Extracellular" evidence="1">
    <location>
        <begin position="260"/>
        <end position="267"/>
    </location>
</feature>
<feature type="transmembrane region" description="Helical; Name=7" evidence="1">
    <location>
        <begin position="268"/>
        <end position="288"/>
    </location>
</feature>
<feature type="topological domain" description="Cytoplasmic" evidence="1">
    <location>
        <begin position="289"/>
        <end position="312"/>
    </location>
</feature>
<feature type="glycosylation site" description="N-linked (GlcNAc...) asparagine" evidence="1">
    <location>
        <position position="3"/>
    </location>
</feature>
<feature type="disulfide bond" evidence="2">
    <location>
        <begin position="94"/>
        <end position="176"/>
    </location>
</feature>
<organism>
    <name type="scientific">Homo sapiens</name>
    <name type="common">Human</name>
    <dbReference type="NCBI Taxonomy" id="9606"/>
    <lineage>
        <taxon>Eukaryota</taxon>
        <taxon>Metazoa</taxon>
        <taxon>Chordata</taxon>
        <taxon>Craniata</taxon>
        <taxon>Vertebrata</taxon>
        <taxon>Euteleostomi</taxon>
        <taxon>Mammalia</taxon>
        <taxon>Eutheria</taxon>
        <taxon>Euarchontoglires</taxon>
        <taxon>Primates</taxon>
        <taxon>Haplorrhini</taxon>
        <taxon>Catarrhini</taxon>
        <taxon>Hominidae</taxon>
        <taxon>Homo</taxon>
    </lineage>
</organism>
<dbReference type="EMBL" id="AC125816">
    <property type="status" value="NOT_ANNOTATED_CDS"/>
    <property type="molecule type" value="Genomic_DNA"/>
</dbReference>
<dbReference type="CCDS" id="CCDS31823.1"/>
<dbReference type="RefSeq" id="NP_001005183.1">
    <property type="nucleotide sequence ID" value="NM_001005183.1"/>
</dbReference>
<dbReference type="SMR" id="A6NM76"/>
<dbReference type="FunCoup" id="A6NM76">
    <property type="interactions" value="416"/>
</dbReference>
<dbReference type="STRING" id="9606.ENSP00000328402"/>
<dbReference type="GlyCosmos" id="A6NM76">
    <property type="glycosylation" value="1 site, No reported glycans"/>
</dbReference>
<dbReference type="GlyGen" id="A6NM76">
    <property type="glycosylation" value="2 sites, 1 N-linked glycan (1 site)"/>
</dbReference>
<dbReference type="iPTMnet" id="A6NM76"/>
<dbReference type="PhosphoSitePlus" id="A6NM76"/>
<dbReference type="BioMuta" id="OR6C76"/>
<dbReference type="jPOST" id="A6NM76"/>
<dbReference type="MassIVE" id="A6NM76"/>
<dbReference type="PaxDb" id="9606-ENSP00000328402"/>
<dbReference type="Antibodypedia" id="77101">
    <property type="antibodies" value="6 antibodies from 6 providers"/>
</dbReference>
<dbReference type="DNASU" id="390326"/>
<dbReference type="Ensembl" id="ENST00000328314.3">
    <property type="protein sequence ID" value="ENSP00000328402.3"/>
    <property type="gene ID" value="ENSG00000185821.3"/>
</dbReference>
<dbReference type="GeneID" id="390326"/>
<dbReference type="KEGG" id="hsa:390326"/>
<dbReference type="MANE-Select" id="ENST00000328314.3">
    <property type="protein sequence ID" value="ENSP00000328402.3"/>
    <property type="RefSeq nucleotide sequence ID" value="NM_001005183.1"/>
    <property type="RefSeq protein sequence ID" value="NP_001005183.1"/>
</dbReference>
<dbReference type="UCSC" id="uc010spm.2">
    <property type="organism name" value="human"/>
</dbReference>
<dbReference type="AGR" id="HGNC:31305"/>
<dbReference type="CTD" id="390326"/>
<dbReference type="GeneCards" id="OR6C76"/>
<dbReference type="HGNC" id="HGNC:31305">
    <property type="gene designation" value="OR6C76"/>
</dbReference>
<dbReference type="HPA" id="ENSG00000185821">
    <property type="expression patterns" value="Not detected"/>
</dbReference>
<dbReference type="neXtProt" id="NX_A6NM76"/>
<dbReference type="PharmGKB" id="PA134906466"/>
<dbReference type="VEuPathDB" id="HostDB:ENSG00000185821"/>
<dbReference type="eggNOG" id="ENOG502R93V">
    <property type="taxonomic scope" value="Eukaryota"/>
</dbReference>
<dbReference type="GeneTree" id="ENSGT01130000278269"/>
<dbReference type="HOGENOM" id="CLU_012526_1_1_1"/>
<dbReference type="InParanoid" id="A6NM76"/>
<dbReference type="OMA" id="MSDRICY"/>
<dbReference type="OrthoDB" id="9444602at2759"/>
<dbReference type="PAN-GO" id="A6NM76">
    <property type="GO annotations" value="1 GO annotation based on evolutionary models"/>
</dbReference>
<dbReference type="PhylomeDB" id="A6NM76"/>
<dbReference type="TreeFam" id="TF336833"/>
<dbReference type="PathwayCommons" id="A6NM76"/>
<dbReference type="Reactome" id="R-HSA-9752946">
    <property type="pathway name" value="Expression and translocation of olfactory receptors"/>
</dbReference>
<dbReference type="BioGRID-ORCS" id="390326">
    <property type="hits" value="12 hits in 743 CRISPR screens"/>
</dbReference>
<dbReference type="GenomeRNAi" id="390326"/>
<dbReference type="Pharos" id="A6NM76">
    <property type="development level" value="Tdark"/>
</dbReference>
<dbReference type="PRO" id="PR:A6NM76"/>
<dbReference type="Proteomes" id="UP000005640">
    <property type="component" value="Chromosome 12"/>
</dbReference>
<dbReference type="RNAct" id="A6NM76">
    <property type="molecule type" value="protein"/>
</dbReference>
<dbReference type="Bgee" id="ENSG00000185821">
    <property type="expression patterns" value="Expressed in male germ line stem cell (sensu Vertebrata) in testis and 1 other cell type or tissue"/>
</dbReference>
<dbReference type="ExpressionAtlas" id="A6NM76">
    <property type="expression patterns" value="baseline and differential"/>
</dbReference>
<dbReference type="GO" id="GO:0005886">
    <property type="term" value="C:plasma membrane"/>
    <property type="evidence" value="ECO:0007669"/>
    <property type="project" value="UniProtKB-SubCell"/>
</dbReference>
<dbReference type="GO" id="GO:0004930">
    <property type="term" value="F:G protein-coupled receptor activity"/>
    <property type="evidence" value="ECO:0007669"/>
    <property type="project" value="UniProtKB-KW"/>
</dbReference>
<dbReference type="GO" id="GO:0004984">
    <property type="term" value="F:olfactory receptor activity"/>
    <property type="evidence" value="ECO:0000318"/>
    <property type="project" value="GO_Central"/>
</dbReference>
<dbReference type="CDD" id="cd15912">
    <property type="entry name" value="7tmA_OR6C-like"/>
    <property type="match status" value="1"/>
</dbReference>
<dbReference type="FunFam" id="1.10.1220.70:FF:000001">
    <property type="entry name" value="Olfactory receptor"/>
    <property type="match status" value="1"/>
</dbReference>
<dbReference type="FunFam" id="1.20.1070.10:FF:000013">
    <property type="entry name" value="Olfactory receptor"/>
    <property type="match status" value="1"/>
</dbReference>
<dbReference type="Gene3D" id="1.20.1070.10">
    <property type="entry name" value="Rhodopsin 7-helix transmembrane proteins"/>
    <property type="match status" value="1"/>
</dbReference>
<dbReference type="InterPro" id="IPR000276">
    <property type="entry name" value="GPCR_Rhodpsn"/>
</dbReference>
<dbReference type="InterPro" id="IPR017452">
    <property type="entry name" value="GPCR_Rhodpsn_7TM"/>
</dbReference>
<dbReference type="InterPro" id="IPR000725">
    <property type="entry name" value="Olfact_rcpt"/>
</dbReference>
<dbReference type="InterPro" id="IPR047132">
    <property type="entry name" value="Olfact_rcpt_6C-like"/>
</dbReference>
<dbReference type="PANTHER" id="PTHR26454">
    <property type="entry name" value="OLFACTORY RECEPTOR"/>
    <property type="match status" value="1"/>
</dbReference>
<dbReference type="PANTHER" id="PTHR26454:SF18">
    <property type="entry name" value="OLFACTORY RECEPTOR 6C76"/>
    <property type="match status" value="1"/>
</dbReference>
<dbReference type="Pfam" id="PF13853">
    <property type="entry name" value="7tm_4"/>
    <property type="match status" value="1"/>
</dbReference>
<dbReference type="PRINTS" id="PR00237">
    <property type="entry name" value="GPCRRHODOPSN"/>
</dbReference>
<dbReference type="PRINTS" id="PR00245">
    <property type="entry name" value="OLFACTORYR"/>
</dbReference>
<dbReference type="SUPFAM" id="SSF81321">
    <property type="entry name" value="Family A G protein-coupled receptor-like"/>
    <property type="match status" value="1"/>
</dbReference>
<dbReference type="PROSITE" id="PS50262">
    <property type="entry name" value="G_PROTEIN_RECEP_F1_2"/>
    <property type="match status" value="1"/>
</dbReference>
<protein>
    <recommendedName>
        <fullName>Olfactory receptor 6C76</fullName>
    </recommendedName>
</protein>
<accession>A6NM76</accession>
<gene>
    <name type="primary">OR6C76</name>
</gene>
<proteinExistence type="inferred from homology"/>
<keyword id="KW-1003">Cell membrane</keyword>
<keyword id="KW-1015">Disulfide bond</keyword>
<keyword id="KW-0297">G-protein coupled receptor</keyword>
<keyword id="KW-0325">Glycoprotein</keyword>
<keyword id="KW-0472">Membrane</keyword>
<keyword id="KW-0552">Olfaction</keyword>
<keyword id="KW-0675">Receptor</keyword>
<keyword id="KW-1185">Reference proteome</keyword>
<keyword id="KW-0716">Sensory transduction</keyword>
<keyword id="KW-0807">Transducer</keyword>
<keyword id="KW-0812">Transmembrane</keyword>
<keyword id="KW-1133">Transmembrane helix</keyword>